<sequence>MSGSTGERSFADIITSIRYWVIHSITIPSLFIAGWLFVSTGLAYDVFGSPRPNEYFTESRQGIPLITDRFDSLEQLDEFSRSF</sequence>
<proteinExistence type="evidence at protein level"/>
<evidence type="ECO:0000255" key="1">
    <source>
        <dbReference type="HAMAP-Rule" id="MF_00642"/>
    </source>
</evidence>
<evidence type="ECO:0000269" key="2">
    <source>
    </source>
</evidence>
<evidence type="ECO:0000305" key="3"/>
<evidence type="ECO:0000305" key="4">
    <source>
    </source>
</evidence>
<comment type="function">
    <text evidence="1">This b-type cytochrome is tightly associated with the reaction center of photosystem II (PSII). PSII is a light-driven water:plastoquinone oxidoreductase that uses light energy to abstract electrons from H(2)O, generating O(2) and a proton gradient subsequently used for ATP formation. It consists of a core antenna complex that captures photons, and an electron transfer chain that converts photonic excitation into a charge separation.</text>
</comment>
<comment type="cofactor">
    <cofactor evidence="1">
        <name>heme b</name>
        <dbReference type="ChEBI" id="CHEBI:60344"/>
    </cofactor>
    <text evidence="1">With its partner (PsbF) binds heme. PSII binds additional chlorophylls, carotenoids and specific lipids.</text>
</comment>
<comment type="subunit">
    <text evidence="1 2">Heterodimer of an alpha subunit and a beta subunit. PSII is composed of 1 copy each of membrane proteins PsbA, PsbB, PsbC, PsbD, PsbE, PsbF, PsbH, PsbI, PsbJ, PsbK, PsbL, PsbM, PsbT, PsbX, PsbY, PsbZ, Psb30/Ycf12, at least 3 peripheral proteins of the oxygen-evolving complex and a large number of cofactors. It forms dimeric complexes (By similarity). Detected in both etioplasts and green leaves; PSII is only assembled in green leaves (PubMed:19137553).</text>
</comment>
<comment type="subcellular location">
    <subcellularLocation>
        <location evidence="1 4">Plastid</location>
        <location evidence="1 4">Chloroplast thylakoid membrane</location>
        <topology evidence="1 4">Single-pass membrane protein</topology>
    </subcellularLocation>
</comment>
<comment type="similarity">
    <text evidence="1">Belongs to the PsbE/PsbF family.</text>
</comment>
<organism>
    <name type="scientific">Hordeum vulgare</name>
    <name type="common">Barley</name>
    <dbReference type="NCBI Taxonomy" id="4513"/>
    <lineage>
        <taxon>Eukaryota</taxon>
        <taxon>Viridiplantae</taxon>
        <taxon>Streptophyta</taxon>
        <taxon>Embryophyta</taxon>
        <taxon>Tracheophyta</taxon>
        <taxon>Spermatophyta</taxon>
        <taxon>Magnoliopsida</taxon>
        <taxon>Liliopsida</taxon>
        <taxon>Poales</taxon>
        <taxon>Poaceae</taxon>
        <taxon>BOP clade</taxon>
        <taxon>Pooideae</taxon>
        <taxon>Triticodae</taxon>
        <taxon>Triticeae</taxon>
        <taxon>Hordeinae</taxon>
        <taxon>Hordeum</taxon>
    </lineage>
</organism>
<name>PSBE_HORVU</name>
<reference key="1">
    <citation type="journal article" date="1989" name="Nucleic Acids Res.">
        <title>Nucleotide sequence of the barley chloroplast psbE, psbF genes and flanking regions.</title>
        <authorList>
            <person name="Chakhmakhcheva O.G."/>
            <person name="Andreeva A.V."/>
            <person name="Buryakova A.A."/>
            <person name="Reverdatto S.V."/>
            <person name="Efimov V.A."/>
        </authorList>
    </citation>
    <scope>NUCLEOTIDE SEQUENCE [GENOMIC DNA]</scope>
    <source>
        <strain>cv. Sabarlis</strain>
    </source>
</reference>
<reference key="2">
    <citation type="journal article" date="1991" name="Bioorg. Khim.">
        <title>Photosystem II of rye. Nucleotide sequence of the psbB, psbC, psbE, psbF, psbH genes of rye and chloroplast DNA regions adjacent to them.</title>
        <authorList>
            <person name="Efimov V.A."/>
            <person name="Andreeva A.V."/>
            <person name="Reverdatto S.V."/>
            <person name="Chakhmakhcheva O.G."/>
        </authorList>
    </citation>
    <scope>NUCLEOTIDE SEQUENCE [GENOMIC DNA]</scope>
    <source>
        <strain>cv. Sabarlis</strain>
    </source>
</reference>
<reference key="3">
    <citation type="journal article" date="1988" name="Carlsberg Res. Commun.">
        <title>Characterization and in vitro expression of the cytochrome b-559 genes of barley. I. Localization and sequence of the genes.</title>
        <authorList>
            <person name="Krupinska K."/>
            <person name="Berry-Lowe S."/>
        </authorList>
    </citation>
    <scope>NUCLEOTIDE SEQUENCE [GENOMIC DNA]</scope>
</reference>
<reference key="4">
    <citation type="journal article" date="1988" name="Carlsberg Res. Commun.">
        <title>Characterization and in vitro expression of the cytochrome b-559 genes of barley. II. In vitro transcription and translation.</title>
        <authorList>
            <person name="Krupinska K."/>
        </authorList>
    </citation>
    <scope>NUCLEOTIDE SEQUENCE [GENOMIC DNA]</scope>
</reference>
<reference key="5">
    <citation type="journal article" date="2007" name="Theor. Appl. Genet.">
        <title>Complete chloroplast genome sequences of Hordeum vulgare, Sorghum bicolor and Agrostis stolonifera, and comparative analyses with other grass genomes.</title>
        <authorList>
            <person name="Saski C."/>
            <person name="Lee S.-B."/>
            <person name="Fjellheim S."/>
            <person name="Guda C."/>
            <person name="Jansen R.K."/>
            <person name="Luo H."/>
            <person name="Tomkins J."/>
            <person name="Rognli O.A."/>
            <person name="Daniell H."/>
            <person name="Clarke J.L."/>
        </authorList>
    </citation>
    <scope>NUCLEOTIDE SEQUENCE [LARGE SCALE GENOMIC DNA]</scope>
    <source>
        <strain>cv. Morex</strain>
    </source>
</reference>
<reference key="6">
    <citation type="journal article" date="2009" name="Proteomics">
        <title>Mass spectrometric characterization of membrane integral low molecular weight proteins from photosystem II in barley etioplasts.</title>
        <authorList>
            <person name="Ploescher M."/>
            <person name="Granvogl B."/>
            <person name="Zoryan M."/>
            <person name="Reisinger V."/>
            <person name="Eichacker L.A."/>
        </authorList>
    </citation>
    <scope>IDENTIFICATION BY MASS SPECTROMETRY</scope>
    <scope>SUBUNIT</scope>
    <scope>SUBCELLULAR LOCATION</scope>
    <source>
        <strain>cv. Steffi</strain>
    </source>
</reference>
<feature type="chain" id="PRO_0000200313" description="Cytochrome b559 subunit alpha">
    <location>
        <begin position="1"/>
        <end position="83"/>
    </location>
</feature>
<feature type="transmembrane region" description="Helical" evidence="1">
    <location>
        <begin position="21"/>
        <end position="35"/>
    </location>
</feature>
<feature type="binding site" description="axial binding residue" evidence="1">
    <location>
        <position position="23"/>
    </location>
    <ligand>
        <name>heme</name>
        <dbReference type="ChEBI" id="CHEBI:30413"/>
        <note>ligand shared with beta subunit</note>
    </ligand>
    <ligandPart>
        <name>Fe</name>
        <dbReference type="ChEBI" id="CHEBI:18248"/>
    </ligandPart>
</feature>
<feature type="sequence conflict" description="In Ref. 1; CAA32270." evidence="3" ref="1">
    <original>S</original>
    <variation>C</variation>
    <location>
        <position position="16"/>
    </location>
</feature>
<feature type="sequence conflict" description="In Ref. 1; CAA32270." evidence="3" ref="1">
    <original>H</original>
    <variation>R</variation>
    <location>
        <position position="23"/>
    </location>
</feature>
<gene>
    <name evidence="1" type="primary">psbE</name>
</gene>
<protein>
    <recommendedName>
        <fullName evidence="1">Cytochrome b559 subunit alpha</fullName>
    </recommendedName>
    <alternativeName>
        <fullName evidence="1">PSII reaction center subunit V</fullName>
    </alternativeName>
</protein>
<geneLocation type="chloroplast"/>
<dbReference type="EMBL" id="X14108">
    <property type="protein sequence ID" value="CAA32270.1"/>
    <property type="molecule type" value="Genomic_DNA"/>
</dbReference>
<dbReference type="EMBL" id="M35977">
    <property type="protein sequence ID" value="AAA84044.1"/>
    <property type="molecule type" value="Genomic_DNA"/>
</dbReference>
<dbReference type="EMBL" id="M35616">
    <property type="protein sequence ID" value="AAA84048.1"/>
    <property type="molecule type" value="Genomic_DNA"/>
</dbReference>
<dbReference type="EMBL" id="EF115541">
    <property type="protein sequence ID" value="ABK79429.1"/>
    <property type="molecule type" value="Genomic_DNA"/>
</dbReference>
<dbReference type="PIR" id="A29956">
    <property type="entry name" value="A29956"/>
</dbReference>
<dbReference type="RefSeq" id="YP_010144442.1">
    <property type="nucleotide sequence ID" value="NC_056985.1"/>
</dbReference>
<dbReference type="RefSeq" id="YP_874669.1">
    <property type="nucleotide sequence ID" value="NC_008590.1"/>
</dbReference>
<dbReference type="SMR" id="P69390"/>
<dbReference type="GeneID" id="4525055"/>
<dbReference type="GeneID" id="67140655"/>
<dbReference type="GO" id="GO:0009535">
    <property type="term" value="C:chloroplast thylakoid membrane"/>
    <property type="evidence" value="ECO:0007669"/>
    <property type="project" value="UniProtKB-SubCell"/>
</dbReference>
<dbReference type="GO" id="GO:0009539">
    <property type="term" value="C:photosystem II reaction center"/>
    <property type="evidence" value="ECO:0007669"/>
    <property type="project" value="InterPro"/>
</dbReference>
<dbReference type="GO" id="GO:0009055">
    <property type="term" value="F:electron transfer activity"/>
    <property type="evidence" value="ECO:0007669"/>
    <property type="project" value="UniProtKB-UniRule"/>
</dbReference>
<dbReference type="GO" id="GO:0020037">
    <property type="term" value="F:heme binding"/>
    <property type="evidence" value="ECO:0007669"/>
    <property type="project" value="InterPro"/>
</dbReference>
<dbReference type="GO" id="GO:0005506">
    <property type="term" value="F:iron ion binding"/>
    <property type="evidence" value="ECO:0007669"/>
    <property type="project" value="UniProtKB-UniRule"/>
</dbReference>
<dbReference type="GO" id="GO:0009767">
    <property type="term" value="P:photosynthetic electron transport chain"/>
    <property type="evidence" value="ECO:0007669"/>
    <property type="project" value="InterPro"/>
</dbReference>
<dbReference type="Gene3D" id="1.20.5.860">
    <property type="entry name" value="Photosystem II cytochrome b559, alpha subunit"/>
    <property type="match status" value="1"/>
</dbReference>
<dbReference type="HAMAP" id="MF_00642">
    <property type="entry name" value="PSII_PsbE"/>
    <property type="match status" value="1"/>
</dbReference>
<dbReference type="InterPro" id="IPR006217">
    <property type="entry name" value="PSII_cyt_b559_asu"/>
</dbReference>
<dbReference type="InterPro" id="IPR037025">
    <property type="entry name" value="PSII_cyt_b559_asu_sf"/>
</dbReference>
<dbReference type="InterPro" id="IPR006216">
    <property type="entry name" value="PSII_cyt_b559_CS"/>
</dbReference>
<dbReference type="InterPro" id="IPR013081">
    <property type="entry name" value="PSII_cyt_b559_N"/>
</dbReference>
<dbReference type="InterPro" id="IPR013082">
    <property type="entry name" value="PSII_cytb559_asu_lum"/>
</dbReference>
<dbReference type="NCBIfam" id="TIGR01332">
    <property type="entry name" value="cyt_b559_alpha"/>
    <property type="match status" value="1"/>
</dbReference>
<dbReference type="PANTHER" id="PTHR33391:SF13">
    <property type="entry name" value="CYTOCHROME B559 SUBUNIT ALPHA"/>
    <property type="match status" value="1"/>
</dbReference>
<dbReference type="PANTHER" id="PTHR33391">
    <property type="entry name" value="CYTOCHROME B559 SUBUNIT BETA-RELATED"/>
    <property type="match status" value="1"/>
</dbReference>
<dbReference type="Pfam" id="PF00283">
    <property type="entry name" value="Cytochrom_B559"/>
    <property type="match status" value="1"/>
</dbReference>
<dbReference type="Pfam" id="PF00284">
    <property type="entry name" value="Cytochrom_B559a"/>
    <property type="match status" value="1"/>
</dbReference>
<dbReference type="PIRSF" id="PIRSF000036">
    <property type="entry name" value="PsbE"/>
    <property type="match status" value="1"/>
</dbReference>
<dbReference type="SUPFAM" id="SSF161045">
    <property type="entry name" value="Cytochrome b559 subunits"/>
    <property type="match status" value="1"/>
</dbReference>
<dbReference type="PROSITE" id="PS00537">
    <property type="entry name" value="CYTOCHROME_B559"/>
    <property type="match status" value="1"/>
</dbReference>
<keyword id="KW-0150">Chloroplast</keyword>
<keyword id="KW-0249">Electron transport</keyword>
<keyword id="KW-0349">Heme</keyword>
<keyword id="KW-0408">Iron</keyword>
<keyword id="KW-0472">Membrane</keyword>
<keyword id="KW-0479">Metal-binding</keyword>
<keyword id="KW-0602">Photosynthesis</keyword>
<keyword id="KW-0604">Photosystem II</keyword>
<keyword id="KW-0934">Plastid</keyword>
<keyword id="KW-0793">Thylakoid</keyword>
<keyword id="KW-0812">Transmembrane</keyword>
<keyword id="KW-1133">Transmembrane helix</keyword>
<keyword id="KW-0813">Transport</keyword>
<accession>P69390</accession>
<accession>A1E9K7</accession>
<accession>P05169</accession>
<accession>P10879</accession>
<accession>Q95H57</accession>